<name>ACKA_BORDL</name>
<organism>
    <name type="scientific">Borrelia duttonii (strain Ly)</name>
    <dbReference type="NCBI Taxonomy" id="412419"/>
    <lineage>
        <taxon>Bacteria</taxon>
        <taxon>Pseudomonadati</taxon>
        <taxon>Spirochaetota</taxon>
        <taxon>Spirochaetia</taxon>
        <taxon>Spirochaetales</taxon>
        <taxon>Borreliaceae</taxon>
        <taxon>Borrelia</taxon>
    </lineage>
</organism>
<dbReference type="EC" id="2.7.2.1" evidence="1"/>
<dbReference type="EMBL" id="CP000976">
    <property type="protein sequence ID" value="ACH93557.1"/>
    <property type="molecule type" value="Genomic_DNA"/>
</dbReference>
<dbReference type="SMR" id="B5RMH1"/>
<dbReference type="STRING" id="412419.BDU_626"/>
<dbReference type="KEGG" id="bdu:BDU_626"/>
<dbReference type="eggNOG" id="COG0282">
    <property type="taxonomic scope" value="Bacteria"/>
</dbReference>
<dbReference type="HOGENOM" id="CLU_020352_0_1_12"/>
<dbReference type="OrthoDB" id="9802453at2"/>
<dbReference type="UniPathway" id="UPA00340">
    <property type="reaction ID" value="UER00458"/>
</dbReference>
<dbReference type="Proteomes" id="UP000000611">
    <property type="component" value="Chromosome"/>
</dbReference>
<dbReference type="GO" id="GO:0005737">
    <property type="term" value="C:cytoplasm"/>
    <property type="evidence" value="ECO:0007669"/>
    <property type="project" value="UniProtKB-SubCell"/>
</dbReference>
<dbReference type="GO" id="GO:0008776">
    <property type="term" value="F:acetate kinase activity"/>
    <property type="evidence" value="ECO:0007669"/>
    <property type="project" value="UniProtKB-UniRule"/>
</dbReference>
<dbReference type="GO" id="GO:0005524">
    <property type="term" value="F:ATP binding"/>
    <property type="evidence" value="ECO:0007669"/>
    <property type="project" value="UniProtKB-KW"/>
</dbReference>
<dbReference type="GO" id="GO:0000287">
    <property type="term" value="F:magnesium ion binding"/>
    <property type="evidence" value="ECO:0007669"/>
    <property type="project" value="UniProtKB-UniRule"/>
</dbReference>
<dbReference type="GO" id="GO:0006083">
    <property type="term" value="P:acetate metabolic process"/>
    <property type="evidence" value="ECO:0007669"/>
    <property type="project" value="TreeGrafter"/>
</dbReference>
<dbReference type="GO" id="GO:0006085">
    <property type="term" value="P:acetyl-CoA biosynthetic process"/>
    <property type="evidence" value="ECO:0007669"/>
    <property type="project" value="UniProtKB-UniRule"/>
</dbReference>
<dbReference type="CDD" id="cd24010">
    <property type="entry name" value="ASKHA_NBD_AcK_PK"/>
    <property type="match status" value="1"/>
</dbReference>
<dbReference type="Gene3D" id="3.30.420.40">
    <property type="match status" value="2"/>
</dbReference>
<dbReference type="HAMAP" id="MF_00020">
    <property type="entry name" value="Acetate_kinase"/>
    <property type="match status" value="1"/>
</dbReference>
<dbReference type="InterPro" id="IPR004372">
    <property type="entry name" value="Ac/propionate_kinase"/>
</dbReference>
<dbReference type="InterPro" id="IPR000890">
    <property type="entry name" value="Aliphatic_acid_kin_short-chain"/>
</dbReference>
<dbReference type="InterPro" id="IPR023865">
    <property type="entry name" value="Aliphatic_acid_kinase_CS"/>
</dbReference>
<dbReference type="InterPro" id="IPR043129">
    <property type="entry name" value="ATPase_NBD"/>
</dbReference>
<dbReference type="NCBIfam" id="TIGR00016">
    <property type="entry name" value="ackA"/>
    <property type="match status" value="1"/>
</dbReference>
<dbReference type="PANTHER" id="PTHR21060">
    <property type="entry name" value="ACETATE KINASE"/>
    <property type="match status" value="1"/>
</dbReference>
<dbReference type="PANTHER" id="PTHR21060:SF15">
    <property type="entry name" value="ACETATE KINASE-RELATED"/>
    <property type="match status" value="1"/>
</dbReference>
<dbReference type="Pfam" id="PF00871">
    <property type="entry name" value="Acetate_kinase"/>
    <property type="match status" value="1"/>
</dbReference>
<dbReference type="PIRSF" id="PIRSF000722">
    <property type="entry name" value="Acetate_prop_kin"/>
    <property type="match status" value="1"/>
</dbReference>
<dbReference type="PRINTS" id="PR00471">
    <property type="entry name" value="ACETATEKNASE"/>
</dbReference>
<dbReference type="SUPFAM" id="SSF53067">
    <property type="entry name" value="Actin-like ATPase domain"/>
    <property type="match status" value="2"/>
</dbReference>
<dbReference type="PROSITE" id="PS01075">
    <property type="entry name" value="ACETATE_KINASE_1"/>
    <property type="match status" value="1"/>
</dbReference>
<dbReference type="PROSITE" id="PS01076">
    <property type="entry name" value="ACETATE_KINASE_2"/>
    <property type="match status" value="1"/>
</dbReference>
<proteinExistence type="inferred from homology"/>
<accession>B5RMH1</accession>
<protein>
    <recommendedName>
        <fullName evidence="1">Acetate kinase</fullName>
        <ecNumber evidence="1">2.7.2.1</ecNumber>
    </recommendedName>
    <alternativeName>
        <fullName evidence="1">Acetokinase</fullName>
    </alternativeName>
</protein>
<gene>
    <name evidence="1" type="primary">ackA</name>
    <name type="ordered locus">BDU_626</name>
</gene>
<comment type="function">
    <text evidence="1">Catalyzes the formation of acetyl phosphate from acetate and ATP. Can also catalyze the reverse reaction.</text>
</comment>
<comment type="catalytic activity">
    <reaction evidence="1">
        <text>acetate + ATP = acetyl phosphate + ADP</text>
        <dbReference type="Rhea" id="RHEA:11352"/>
        <dbReference type="ChEBI" id="CHEBI:22191"/>
        <dbReference type="ChEBI" id="CHEBI:30089"/>
        <dbReference type="ChEBI" id="CHEBI:30616"/>
        <dbReference type="ChEBI" id="CHEBI:456216"/>
        <dbReference type="EC" id="2.7.2.1"/>
    </reaction>
</comment>
<comment type="cofactor">
    <cofactor evidence="1">
        <name>Mg(2+)</name>
        <dbReference type="ChEBI" id="CHEBI:18420"/>
    </cofactor>
    <cofactor evidence="1">
        <name>Mn(2+)</name>
        <dbReference type="ChEBI" id="CHEBI:29035"/>
    </cofactor>
    <text evidence="1">Mg(2+). Can also accept Mn(2+).</text>
</comment>
<comment type="pathway">
    <text evidence="1">Metabolic intermediate biosynthesis; acetyl-CoA biosynthesis; acetyl-CoA from acetate: step 1/2.</text>
</comment>
<comment type="subunit">
    <text evidence="1">Homodimer.</text>
</comment>
<comment type="subcellular location">
    <subcellularLocation>
        <location evidence="1">Cytoplasm</location>
    </subcellularLocation>
</comment>
<comment type="similarity">
    <text evidence="1">Belongs to the acetokinase family.</text>
</comment>
<feature type="chain" id="PRO_1000089960" description="Acetate kinase">
    <location>
        <begin position="1"/>
        <end position="408"/>
    </location>
</feature>
<feature type="active site" description="Proton donor/acceptor" evidence="1">
    <location>
        <position position="153"/>
    </location>
</feature>
<feature type="binding site" evidence="1">
    <location>
        <position position="10"/>
    </location>
    <ligand>
        <name>Mg(2+)</name>
        <dbReference type="ChEBI" id="CHEBI:18420"/>
    </ligand>
</feature>
<feature type="binding site" evidence="1">
    <location>
        <position position="17"/>
    </location>
    <ligand>
        <name>ATP</name>
        <dbReference type="ChEBI" id="CHEBI:30616"/>
    </ligand>
</feature>
<feature type="binding site" evidence="1">
    <location>
        <position position="96"/>
    </location>
    <ligand>
        <name>substrate</name>
    </ligand>
</feature>
<feature type="binding site" evidence="1">
    <location>
        <begin position="213"/>
        <end position="217"/>
    </location>
    <ligand>
        <name>ATP</name>
        <dbReference type="ChEBI" id="CHEBI:30616"/>
    </ligand>
</feature>
<feature type="binding site" evidence="1">
    <location>
        <begin position="288"/>
        <end position="290"/>
    </location>
    <ligand>
        <name>ATP</name>
        <dbReference type="ChEBI" id="CHEBI:30616"/>
    </ligand>
</feature>
<feature type="binding site" evidence="1">
    <location>
        <position position="393"/>
    </location>
    <ligand>
        <name>Mg(2+)</name>
        <dbReference type="ChEBI" id="CHEBI:18420"/>
    </ligand>
</feature>
<feature type="site" description="Transition state stabilizer" evidence="1">
    <location>
        <position position="185"/>
    </location>
</feature>
<feature type="site" description="Transition state stabilizer" evidence="1">
    <location>
        <position position="246"/>
    </location>
</feature>
<evidence type="ECO:0000255" key="1">
    <source>
        <dbReference type="HAMAP-Rule" id="MF_00020"/>
    </source>
</evidence>
<sequence length="408" mass="46430">MKNIIILIINTGSSSLKFTLYEYQYQSEQILASGIIEKIKTTQAIIKIKFKNKFLELTNLNIKSHKKALKHLIKTLTNKKTKIINYLDQIQGIGHRIVHGGAKFKNSVIINQNVLNELKKISHLAPLHNPIAIKVIEEMFILFPNAKQVACFDTSWHQTMNQKAFLYATPYSWYKDYHIRKYGFHGLSYAYITKRTAIILNKNIEDLNLIILHLGNGASINAVQKGRSYDTSMGLTPLEGLVMGTRSGDIDPTIIPLMSKILKKTTKQIENILNKESGMLGISCKSNDLRDIWIESNNNEYNSKLAVEIMTYRIKKYIGSYLAALDFNIDAIIFTAGIGTSDYEIRKLSLQGFEKIGIKIDFQKNNLAIDKNTEYDISSNQSNIKILVIPTNEELTILEDTYDLIKDN</sequence>
<keyword id="KW-0067">ATP-binding</keyword>
<keyword id="KW-0963">Cytoplasm</keyword>
<keyword id="KW-0418">Kinase</keyword>
<keyword id="KW-0460">Magnesium</keyword>
<keyword id="KW-0479">Metal-binding</keyword>
<keyword id="KW-0547">Nucleotide-binding</keyword>
<keyword id="KW-0808">Transferase</keyword>
<reference key="1">
    <citation type="journal article" date="2008" name="PLoS Genet.">
        <title>The genome of Borrelia recurrentis, the agent of deadly louse-borne relapsing fever, is a degraded subset of tick-borne Borrelia duttonii.</title>
        <authorList>
            <person name="Lescot M."/>
            <person name="Audic S."/>
            <person name="Robert C."/>
            <person name="Nguyen T.T."/>
            <person name="Blanc G."/>
            <person name="Cutler S.J."/>
            <person name="Wincker P."/>
            <person name="Couloux A."/>
            <person name="Claverie J.-M."/>
            <person name="Raoult D."/>
            <person name="Drancourt M."/>
        </authorList>
    </citation>
    <scope>NUCLEOTIDE SEQUENCE [LARGE SCALE GENOMIC DNA]</scope>
    <source>
        <strain>Ly</strain>
    </source>
</reference>